<proteinExistence type="evidence at protein level"/>
<comment type="function">
    <text evidence="6 7">Telomerase is a ribonucleoprotein enzyme essential for the replication of chromosome termini in most eukaryotes. It elongates telomeres. It is a reverse transcriptase that adds simple sequence repeats to chromosome ends by copying a template sequence within the RNA component of the enzyme.</text>
</comment>
<comment type="catalytic activity">
    <reaction evidence="3 6 7">
        <text>DNA(n) + a 2'-deoxyribonucleoside 5'-triphosphate = DNA(n+1) + diphosphate</text>
        <dbReference type="Rhea" id="RHEA:22508"/>
        <dbReference type="Rhea" id="RHEA-COMP:17339"/>
        <dbReference type="Rhea" id="RHEA-COMP:17340"/>
        <dbReference type="ChEBI" id="CHEBI:33019"/>
        <dbReference type="ChEBI" id="CHEBI:61560"/>
        <dbReference type="ChEBI" id="CHEBI:173112"/>
        <dbReference type="EC" id="2.7.7.49"/>
    </reaction>
</comment>
<comment type="subunit">
    <text evidence="6 7">Catalytic subunit of the telomerase holoenzyme complex composed minimally of TERT and the telomerase RNA template component (TERC).</text>
</comment>
<comment type="subcellular location">
    <subcellularLocation>
        <location evidence="1">Nucleus</location>
    </subcellularLocation>
    <subcellularLocation>
        <location evidence="1">Chromosome</location>
        <location evidence="1">Telomere</location>
    </subcellularLocation>
</comment>
<comment type="tissue specificity">
    <text evidence="5">Detected at highest levels in gill, ovary and testis, and at lower levels in brain, eye, heart, skin, spleen and stomach.</text>
</comment>
<comment type="developmental stage">
    <text evidence="5">Expressed at higher levels in actively dividing cells.</text>
</comment>
<comment type="similarity">
    <text evidence="9">Belongs to the reverse transcriptase family. Telomerase subfamily.</text>
</comment>
<gene>
    <name evidence="10" type="primary">tert</name>
</gene>
<organism evidence="10">
    <name type="scientific">Takifugu rubripes</name>
    <name type="common">Japanese pufferfish</name>
    <name type="synonym">Fugu rubripes</name>
    <dbReference type="NCBI Taxonomy" id="31033"/>
    <lineage>
        <taxon>Eukaryota</taxon>
        <taxon>Metazoa</taxon>
        <taxon>Chordata</taxon>
        <taxon>Craniata</taxon>
        <taxon>Vertebrata</taxon>
        <taxon>Euteleostomi</taxon>
        <taxon>Actinopterygii</taxon>
        <taxon>Neopterygii</taxon>
        <taxon>Teleostei</taxon>
        <taxon>Neoteleostei</taxon>
        <taxon>Acanthomorphata</taxon>
        <taxon>Eupercaria</taxon>
        <taxon>Tetraodontiformes</taxon>
        <taxon>Tetradontoidea</taxon>
        <taxon>Tetraodontidae</taxon>
        <taxon>Takifugu</taxon>
    </lineage>
</organism>
<keyword id="KW-0002">3D-structure</keyword>
<keyword id="KW-0158">Chromosome</keyword>
<keyword id="KW-0460">Magnesium</keyword>
<keyword id="KW-0479">Metal-binding</keyword>
<keyword id="KW-0548">Nucleotidyltransferase</keyword>
<keyword id="KW-0539">Nucleus</keyword>
<keyword id="KW-1185">Reference proteome</keyword>
<keyword id="KW-0687">Ribonucleoprotein</keyword>
<keyword id="KW-0694">RNA-binding</keyword>
<keyword id="KW-0695">RNA-directed DNA polymerase</keyword>
<keyword id="KW-0779">Telomere</keyword>
<keyword id="KW-0808">Transferase</keyword>
<dbReference type="EC" id="2.7.7.49" evidence="6 7"/>
<dbReference type="EMBL" id="AY861384">
    <property type="protein sequence ID" value="AAX59693.1"/>
    <property type="molecule type" value="Genomic_DNA"/>
</dbReference>
<dbReference type="PDB" id="4LMO">
    <property type="method" value="X-ray"/>
    <property type="resolution" value="2.37 A"/>
    <property type="chains" value="A/B/C/D=294-544"/>
</dbReference>
<dbReference type="PDBsum" id="4LMO"/>
<dbReference type="SMR" id="Q4KTA7"/>
<dbReference type="STRING" id="31033.ENSTRUP00000036305"/>
<dbReference type="eggNOG" id="KOG1005">
    <property type="taxonomic scope" value="Eukaryota"/>
</dbReference>
<dbReference type="InParanoid" id="Q4KTA7"/>
<dbReference type="EvolutionaryTrace" id="Q4KTA7"/>
<dbReference type="Proteomes" id="UP000005226">
    <property type="component" value="Unplaced"/>
</dbReference>
<dbReference type="GO" id="GO:0000781">
    <property type="term" value="C:chromosome, telomeric region"/>
    <property type="evidence" value="ECO:0007669"/>
    <property type="project" value="UniProtKB-SubCell"/>
</dbReference>
<dbReference type="GO" id="GO:0000333">
    <property type="term" value="C:telomerase catalytic core complex"/>
    <property type="evidence" value="ECO:0000314"/>
    <property type="project" value="UniProtKB"/>
</dbReference>
<dbReference type="GO" id="GO:0046872">
    <property type="term" value="F:metal ion binding"/>
    <property type="evidence" value="ECO:0007669"/>
    <property type="project" value="UniProtKB-KW"/>
</dbReference>
<dbReference type="GO" id="GO:0003720">
    <property type="term" value="F:telomerase activity"/>
    <property type="evidence" value="ECO:0000314"/>
    <property type="project" value="UniProtKB"/>
</dbReference>
<dbReference type="GO" id="GO:0070034">
    <property type="term" value="F:telomerase RNA binding"/>
    <property type="evidence" value="ECO:0000353"/>
    <property type="project" value="UniProtKB"/>
</dbReference>
<dbReference type="GO" id="GO:0042162">
    <property type="term" value="F:telomeric DNA binding"/>
    <property type="evidence" value="ECO:0007669"/>
    <property type="project" value="TreeGrafter"/>
</dbReference>
<dbReference type="GO" id="GO:0022616">
    <property type="term" value="P:DNA strand elongation"/>
    <property type="evidence" value="ECO:0000314"/>
    <property type="project" value="UniProtKB"/>
</dbReference>
<dbReference type="GO" id="GO:0007004">
    <property type="term" value="P:telomere maintenance via telomerase"/>
    <property type="evidence" value="ECO:0000250"/>
    <property type="project" value="UniProtKB"/>
</dbReference>
<dbReference type="CDD" id="cd01648">
    <property type="entry name" value="TERT"/>
    <property type="match status" value="1"/>
</dbReference>
<dbReference type="FunFam" id="1.10.132.70:FF:000002">
    <property type="entry name" value="Telomerase reverse transcriptase"/>
    <property type="match status" value="1"/>
</dbReference>
<dbReference type="FunFam" id="1.10.357.90:FF:000001">
    <property type="entry name" value="Telomerase reverse transcriptase"/>
    <property type="match status" value="1"/>
</dbReference>
<dbReference type="Gene3D" id="1.10.132.70">
    <property type="match status" value="1"/>
</dbReference>
<dbReference type="Gene3D" id="1.10.357.90">
    <property type="match status" value="1"/>
</dbReference>
<dbReference type="Gene3D" id="3.30.70.2630">
    <property type="match status" value="1"/>
</dbReference>
<dbReference type="IDEAL" id="IID50329"/>
<dbReference type="InterPro" id="IPR043502">
    <property type="entry name" value="DNA/RNA_pol_sf"/>
</dbReference>
<dbReference type="InterPro" id="IPR000477">
    <property type="entry name" value="RT_dom"/>
</dbReference>
<dbReference type="InterPro" id="IPR021891">
    <property type="entry name" value="Telomerase_RBD"/>
</dbReference>
<dbReference type="InterPro" id="IPR003545">
    <property type="entry name" value="Telomerase_RT"/>
</dbReference>
<dbReference type="InterPro" id="IPR049139">
    <property type="entry name" value="TERT_C"/>
</dbReference>
<dbReference type="PANTHER" id="PTHR12066">
    <property type="entry name" value="TELOMERASE REVERSE TRANSCRIPTASE"/>
    <property type="match status" value="1"/>
</dbReference>
<dbReference type="PANTHER" id="PTHR12066:SF0">
    <property type="entry name" value="TELOMERASE REVERSE TRANSCRIPTASE"/>
    <property type="match status" value="1"/>
</dbReference>
<dbReference type="Pfam" id="PF00078">
    <property type="entry name" value="RVT_1"/>
    <property type="match status" value="1"/>
</dbReference>
<dbReference type="Pfam" id="PF12009">
    <property type="entry name" value="Telomerase_RBD"/>
    <property type="match status" value="1"/>
</dbReference>
<dbReference type="Pfam" id="PF21399">
    <property type="entry name" value="TERT_C"/>
    <property type="match status" value="1"/>
</dbReference>
<dbReference type="PRINTS" id="PR01365">
    <property type="entry name" value="TELOMERASERT"/>
</dbReference>
<dbReference type="SMART" id="SM00975">
    <property type="entry name" value="Telomerase_RBD"/>
    <property type="match status" value="1"/>
</dbReference>
<dbReference type="SUPFAM" id="SSF56672">
    <property type="entry name" value="DNA/RNA polymerases"/>
    <property type="match status" value="1"/>
</dbReference>
<dbReference type="PROSITE" id="PS50878">
    <property type="entry name" value="RT_POL"/>
    <property type="match status" value="1"/>
</dbReference>
<sequence length="1074" mass="122505">MSITDLSPTLGILRSLYPHVQVLVDFADDIVFREGHKATLIEESDTSHFKSFVRGIFVCFHKELQQVPSCNQICTLPELLAFVLNSVKRKRKRNVLAHGYNFQSLAQEERDADQFKLQGDVTQSAAYVHGSDLWRKVSMRLGTDITRYLFESCSVFVAVPPSCLFQVCGIPIYDCFSLATASLGFSLQSRGCRERCLGVNSMKRRAFNVKRYLRKRKTETDQKDEARVCSGKRRRVMEEDKVSCETMQDGESGKTTLVQKQPGSKKRSEMEATLLPLEGGPSWRSGTFPPLPPSQSFMRTLGFLYGGRGMRSFLLNRKKKTAEGFRKIQGRDLIRIVFFEGVLYLNGLERKPKKLPRRFFNMVPLFSQLLRQHRRCPYSRLLQKTCPLVGIKDAGQAELSSFLPQHCGSHRVYLFVRECLLAVIPQELWGSEHNRLLYFARVRFFLRSGKFERLSVAELMWKIKVNNCDWLKISKTGRVPPSELSYRTQILGQFLAWLLDGFVVGLVRACFYATESMGQKNAIRFYRQEVWAKLQDLAFRSHISKGQMVELTPDQVAALPKSTIISRLRFIPKTDGMRPITRVIGADAKTRLYQSHVRDLLDMLRACVCSTPSLLGSTVWGMTDIHKVLSSIAPAQKEKPQPLYFVKMDVSGAYESLPHNKLIEVINQVLTPVLNEVFTIRRFAKIWADSHEGLKKAFIRQADFLEANMGSINMKQFLTSLQKKGKLHHSVLVEQIFSSDLEGKDALQFFTQILKGSVIQFGKKTYRQCQGVPQGSAVSSVLCCLCYGHMENVLFKDIINKKSCLMRLVDDFLLITPNLHDAQTFLKILLAGVPQYGLVVNPQKVVVNFEDYGSTDSCPGLRVLPLRCLFPWCGLLLDTHTLDIYKDYSSYADLSLRYSLTLGSCHSAGHQMKRKLMGILRLKCHALFLDLKTNSLEAIYKNIYKLLLLHALRFHVCAQSLPFGQSVAKNPAYFLLMIWDMVEYTNYLIRLSNNGLISGSTSQTGSVQYEAVELLFCLSFLLVLSKHRRLYKDLLLHLHKRKRRLEQCLGDLRLARVRQAANPRNPLDFLAIKT</sequence>
<reference evidence="10" key="1">
    <citation type="journal article" date="2005" name="Gene">
        <title>Cloning and expression of the reverse transcriptase component of pufferfish (Fugu rubripes) telomerase.</title>
        <authorList>
            <person name="Yap W.H."/>
            <person name="Yeoh E."/>
            <person name="Brenner S."/>
            <person name="Venkatesh B."/>
        </authorList>
    </citation>
    <scope>NUCLEOTIDE SEQUENCE [GENOMIC DNA / MRNA]</scope>
    <scope>TISSUE SPECIFICITY</scope>
    <scope>DEVELOPMENTAL STAGE</scope>
    <source>
        <tissue evidence="8">Gill</tissue>
        <tissue evidence="8">Testis</tissue>
    </source>
</reference>
<reference evidence="9" key="2">
    <citation type="journal article" date="2008" name="J. Biol. Chem.">
        <title>Structure and function of the smallest vertebrate telomerase RNA from teleost fish.</title>
        <authorList>
            <person name="Xie M."/>
            <person name="Mosig A."/>
            <person name="Qi X."/>
            <person name="Li Y."/>
            <person name="Stadler P.F."/>
            <person name="Chen J.J."/>
        </authorList>
    </citation>
    <scope>FUNCTION</scope>
    <scope>CATALYTIC ACTIVITY</scope>
    <scope>SUBUNIT</scope>
    <scope>RECONSTITUTION OF THE TELOMERASE HOLOENZYME COMPLEX</scope>
</reference>
<reference evidence="11" key="3">
    <citation type="journal article" date="2013" name="Structure">
        <title>A motif in the vertebrate telomerase N-terminal linker of TERT contributes to RNA binding and telomerase activity and processivity.</title>
        <authorList>
            <person name="Harkisheimer M."/>
            <person name="Mason M."/>
            <person name="Shuvaeva E."/>
            <person name="Skordalakes E."/>
        </authorList>
    </citation>
    <scope>X-RAY CRYSTALLOGRAPHY (2.37 ANGSTROMS) OF 294-544</scope>
    <scope>CATALYTIC ACTIVITY</scope>
    <scope>RECONSTITUTION OF THE TELOMERASE HOLOENZYME COMPLEX</scope>
    <scope>SUBUNIT</scope>
    <scope>MUTAGENESIS OF 300-THR--TYR-305; TYR-305; TYR-512; THR-514 AND GLU-515</scope>
</reference>
<protein>
    <recommendedName>
        <fullName evidence="8">Telomerase reverse transcriptase</fullName>
        <ecNumber evidence="6 7">2.7.7.49</ecNumber>
    </recommendedName>
    <alternativeName>
        <fullName evidence="9">Telomerase catalytic subunit</fullName>
    </alternativeName>
</protein>
<feature type="chain" id="PRO_0000433392" description="Telomerase reverse transcriptase">
    <location>
        <begin position="1"/>
        <end position="1074"/>
    </location>
</feature>
<feature type="domain" description="Reverse transcriptase" evidence="3">
    <location>
        <begin position="552"/>
        <end position="877"/>
    </location>
</feature>
<feature type="region of interest" description="Disordered" evidence="4">
    <location>
        <begin position="240"/>
        <end position="265"/>
    </location>
</feature>
<feature type="region of interest" description="Interaction with RNA template" evidence="2">
    <location>
        <begin position="355"/>
        <end position="360"/>
    </location>
</feature>
<feature type="region of interest" description="Interaction with RNA template" evidence="2">
    <location>
        <begin position="461"/>
        <end position="486"/>
    </location>
</feature>
<feature type="short sequence motif" description="TFLY; involved in RNA binding" evidence="7">
    <location>
        <begin position="300"/>
        <end position="305"/>
    </location>
</feature>
<feature type="compositionally biased region" description="Polar residues" evidence="4">
    <location>
        <begin position="253"/>
        <end position="262"/>
    </location>
</feature>
<feature type="binding site" evidence="3">
    <location>
        <position position="649"/>
    </location>
    <ligand>
        <name>Mg(2+)</name>
        <dbReference type="ChEBI" id="CHEBI:18420"/>
        <note>catalytic</note>
    </ligand>
</feature>
<feature type="binding site" evidence="3">
    <location>
        <position position="810"/>
    </location>
    <ligand>
        <name>Mg(2+)</name>
        <dbReference type="ChEBI" id="CHEBI:18420"/>
        <note>catalytic</note>
    </ligand>
</feature>
<feature type="binding site" evidence="3">
    <location>
        <position position="811"/>
    </location>
    <ligand>
        <name>Mg(2+)</name>
        <dbReference type="ChEBI" id="CHEBI:18420"/>
        <note>catalytic</note>
    </ligand>
</feature>
<feature type="mutagenesis site" description="Reduced RNA template binding." evidence="7">
    <location>
        <begin position="300"/>
        <end position="305"/>
    </location>
</feature>
<feature type="mutagenesis site" description="Reduced RNA template binding and moderately impaired telomerase activity." evidence="7">
    <original>Y</original>
    <variation>A</variation>
    <location>
        <position position="305"/>
    </location>
</feature>
<feature type="mutagenesis site" description="Reduced RNA template binding and strongly impaired telomerase activity." evidence="7">
    <original>Y</original>
    <variation>A</variation>
    <location>
        <position position="512"/>
    </location>
</feature>
<feature type="mutagenesis site" description="Reduced RNA template binding and strongly impaired telomerase activity." evidence="7">
    <original>T</original>
    <variation>A</variation>
    <location>
        <position position="514"/>
    </location>
</feature>
<feature type="mutagenesis site" description="Reduced RNA template binding and strongly impaired telomerase activity." evidence="7">
    <original>E</original>
    <variation>A</variation>
    <location>
        <position position="515"/>
    </location>
</feature>
<feature type="helix" evidence="12">
    <location>
        <begin position="296"/>
        <end position="305"/>
    </location>
</feature>
<feature type="helix" evidence="12">
    <location>
        <begin position="310"/>
        <end position="312"/>
    </location>
</feature>
<feature type="helix" evidence="12">
    <location>
        <begin position="314"/>
        <end position="316"/>
    </location>
</feature>
<feature type="strand" evidence="12">
    <location>
        <begin position="322"/>
        <end position="326"/>
    </location>
</feature>
<feature type="helix" evidence="12">
    <location>
        <begin position="330"/>
        <end position="338"/>
    </location>
</feature>
<feature type="helix" evidence="12">
    <location>
        <begin position="342"/>
        <end position="346"/>
    </location>
</feature>
<feature type="helix" evidence="12">
    <location>
        <begin position="357"/>
        <end position="360"/>
    </location>
</feature>
<feature type="helix" evidence="12">
    <location>
        <begin position="363"/>
        <end position="375"/>
    </location>
</feature>
<feature type="helix" evidence="12">
    <location>
        <begin position="378"/>
        <end position="383"/>
    </location>
</feature>
<feature type="strand" evidence="12">
    <location>
        <begin position="389"/>
        <end position="393"/>
    </location>
</feature>
<feature type="helix" evidence="12">
    <location>
        <begin position="399"/>
        <end position="402"/>
    </location>
</feature>
<feature type="helix" evidence="12">
    <location>
        <begin position="409"/>
        <end position="423"/>
    </location>
</feature>
<feature type="helix" evidence="12">
    <location>
        <begin position="426"/>
        <end position="429"/>
    </location>
</feature>
<feature type="helix" evidence="12">
    <location>
        <begin position="432"/>
        <end position="448"/>
    </location>
</feature>
<feature type="helix" evidence="12">
    <location>
        <begin position="456"/>
        <end position="459"/>
    </location>
</feature>
<feature type="helix" evidence="12">
    <location>
        <begin position="465"/>
        <end position="467"/>
    </location>
</feature>
<feature type="helix" evidence="12">
    <location>
        <begin position="469"/>
        <end position="471"/>
    </location>
</feature>
<feature type="helix" evidence="12">
    <location>
        <begin position="481"/>
        <end position="500"/>
    </location>
</feature>
<feature type="helix" evidence="12">
    <location>
        <begin position="502"/>
        <end position="510"/>
    </location>
</feature>
<feature type="strand" evidence="12">
    <location>
        <begin position="511"/>
        <end position="515"/>
    </location>
</feature>
<feature type="strand" evidence="12">
    <location>
        <begin position="517"/>
        <end position="519"/>
    </location>
</feature>
<feature type="strand" evidence="12">
    <location>
        <begin position="524"/>
        <end position="527"/>
    </location>
</feature>
<feature type="helix" evidence="12">
    <location>
        <begin position="528"/>
        <end position="541"/>
    </location>
</feature>
<accession>Q4KTA7</accession>
<name>TERT_TAKRU</name>
<evidence type="ECO:0000250" key="1">
    <source>
        <dbReference type="UniProtKB" id="O14746"/>
    </source>
</evidence>
<evidence type="ECO:0000250" key="2">
    <source>
        <dbReference type="UniProtKB" id="Q1PS67"/>
    </source>
</evidence>
<evidence type="ECO:0000255" key="3">
    <source>
        <dbReference type="PROSITE-ProRule" id="PRU00405"/>
    </source>
</evidence>
<evidence type="ECO:0000256" key="4">
    <source>
        <dbReference type="SAM" id="MobiDB-lite"/>
    </source>
</evidence>
<evidence type="ECO:0000269" key="5">
    <source>
    </source>
</evidence>
<evidence type="ECO:0000269" key="6">
    <source>
    </source>
</evidence>
<evidence type="ECO:0000269" key="7">
    <source>
    </source>
</evidence>
<evidence type="ECO:0000303" key="8">
    <source>
    </source>
</evidence>
<evidence type="ECO:0000305" key="9"/>
<evidence type="ECO:0000312" key="10">
    <source>
        <dbReference type="EMBL" id="AAX59693.1"/>
    </source>
</evidence>
<evidence type="ECO:0007744" key="11">
    <source>
        <dbReference type="PDB" id="4LMO"/>
    </source>
</evidence>
<evidence type="ECO:0007829" key="12">
    <source>
        <dbReference type="PDB" id="4LMO"/>
    </source>
</evidence>